<feature type="signal peptide">
    <location>
        <begin position="1"/>
        <end position="21"/>
    </location>
</feature>
<feature type="chain" id="PRO_0000017626" description="Lectin">
    <location>
        <begin position="22"/>
        <end position="262"/>
    </location>
</feature>
<feature type="glycosylation site" description="N-linked (GlcNAc...) asparagine" evidence="1">
    <location>
        <position position="53"/>
    </location>
</feature>
<feature type="glycosylation site" description="N-linked (GlcNAc...) asparagine" evidence="1">
    <location>
        <position position="82"/>
    </location>
</feature>
<feature type="glycosylation site" description="N-linked (GlcNAc...) asparagine" evidence="2">
    <location>
        <position position="100"/>
    </location>
</feature>
<feature type="glycosylation site" description="N-linked (GlcNAc...) asparagine" evidence="1">
    <location>
        <position position="129"/>
    </location>
</feature>
<feature type="glycosylation site" description="N-linked (GlcNAc...) asparagine" evidence="1">
    <location>
        <position position="205"/>
    </location>
</feature>
<comment type="function">
    <text>This metalloglycoprotein, containing Ca(2+), Mn(2+), binds glycoconjugates containing terminal non-reducing alpha-D-GalNAc residues.</text>
</comment>
<comment type="similarity">
    <text evidence="3">Belongs to the leguminous lectin family.</text>
</comment>
<dbReference type="EMBL" id="J05053">
    <property type="protein sequence ID" value="AAA33768.1"/>
    <property type="molecule type" value="mRNA"/>
</dbReference>
<dbReference type="PIR" id="A34403">
    <property type="entry name" value="A34403"/>
</dbReference>
<dbReference type="SMR" id="P16300"/>
<dbReference type="iPTMnet" id="P16300"/>
<dbReference type="GO" id="GO:0030246">
    <property type="term" value="F:carbohydrate binding"/>
    <property type="evidence" value="ECO:0007669"/>
    <property type="project" value="UniProtKB-KW"/>
</dbReference>
<dbReference type="CDD" id="cd06899">
    <property type="entry name" value="lectin_legume_LecRK_Arcelin_ConA"/>
    <property type="match status" value="1"/>
</dbReference>
<dbReference type="Gene3D" id="2.60.120.200">
    <property type="match status" value="1"/>
</dbReference>
<dbReference type="InterPro" id="IPR013320">
    <property type="entry name" value="ConA-like_dom_sf"/>
</dbReference>
<dbReference type="InterPro" id="IPR016363">
    <property type="entry name" value="L-lectin"/>
</dbReference>
<dbReference type="InterPro" id="IPR000985">
    <property type="entry name" value="Lectin_LegA_CS"/>
</dbReference>
<dbReference type="InterPro" id="IPR019825">
    <property type="entry name" value="Lectin_legB_Mn/Ca_BS"/>
</dbReference>
<dbReference type="InterPro" id="IPR001220">
    <property type="entry name" value="Legume_lectin_dom"/>
</dbReference>
<dbReference type="InterPro" id="IPR050258">
    <property type="entry name" value="Leguminous_Lectin"/>
</dbReference>
<dbReference type="PANTHER" id="PTHR32401">
    <property type="entry name" value="CONCANAVALIN A-LIKE LECTIN FAMILY PROTEIN"/>
    <property type="match status" value="1"/>
</dbReference>
<dbReference type="PANTHER" id="PTHR32401:SF45">
    <property type="entry name" value="LECTIN"/>
    <property type="match status" value="1"/>
</dbReference>
<dbReference type="Pfam" id="PF00139">
    <property type="entry name" value="Lectin_legB"/>
    <property type="match status" value="1"/>
</dbReference>
<dbReference type="PIRSF" id="PIRSF002690">
    <property type="entry name" value="L-type_lectin_plant"/>
    <property type="match status" value="1"/>
</dbReference>
<dbReference type="SUPFAM" id="SSF49899">
    <property type="entry name" value="Concanavalin A-like lectins/glucanases"/>
    <property type="match status" value="1"/>
</dbReference>
<dbReference type="PROSITE" id="PS00308">
    <property type="entry name" value="LECTIN_LEGUME_ALPHA"/>
    <property type="match status" value="1"/>
</dbReference>
<dbReference type="PROSITE" id="PS00307">
    <property type="entry name" value="LECTIN_LEGUME_BETA"/>
    <property type="match status" value="1"/>
</dbReference>
<organism>
    <name type="scientific">Phaseolus lunatus</name>
    <name type="common">Lima bean</name>
    <name type="synonym">Phaseolus limensis</name>
    <dbReference type="NCBI Taxonomy" id="3884"/>
    <lineage>
        <taxon>Eukaryota</taxon>
        <taxon>Viridiplantae</taxon>
        <taxon>Streptophyta</taxon>
        <taxon>Embryophyta</taxon>
        <taxon>Tracheophyta</taxon>
        <taxon>Spermatophyta</taxon>
        <taxon>Magnoliopsida</taxon>
        <taxon>eudicotyledons</taxon>
        <taxon>Gunneridae</taxon>
        <taxon>Pentapetalae</taxon>
        <taxon>rosids</taxon>
        <taxon>fabids</taxon>
        <taxon>Fabales</taxon>
        <taxon>Fabaceae</taxon>
        <taxon>Papilionoideae</taxon>
        <taxon>50 kb inversion clade</taxon>
        <taxon>NPAAA clade</taxon>
        <taxon>indigoferoid/millettioid clade</taxon>
        <taxon>Phaseoleae</taxon>
        <taxon>Phaseolus</taxon>
    </lineage>
</organism>
<keyword id="KW-0106">Calcium</keyword>
<keyword id="KW-0325">Glycoprotein</keyword>
<keyword id="KW-0430">Lectin</keyword>
<keyword id="KW-0464">Manganese</keyword>
<keyword id="KW-0732">Signal</keyword>
<reference key="1">
    <citation type="journal article" date="1989" name="J. Biol. Chem.">
        <title>Isolation and characterization of a cDNA clone encoding the lima bean lectin.</title>
        <authorList>
            <person name="Imbrie-Milligan C."/>
            <person name="Datta P."/>
            <person name="Goldstein I.J."/>
        </authorList>
    </citation>
    <scope>NUCLEOTIDE SEQUENCE [MRNA]</scope>
    <scope>GLYCOSYLATION AT ASN-100</scope>
    <source>
        <tissue>Cotyledon</tissue>
    </source>
</reference>
<sequence>MASSVLLVLSLFLVLLLTQASAELFFNFQTFNAANLILQGNAVSSKGHLLLTNVTHNGEPSVASSGRALYSAPIQIRDSTGNASSTPTSHSYTLQQIFQNVTDDPAWLFALVPVDSQPKKKGRLLGLFNKSENDINALTVAVEFDTCHNLDWDKNSIAVNLGIGSVPWNFRDYDGQNADVLITYDSSTKFLAVSLFYPITGKRNNVSANVELEKVLDDWVSVGFSATSGAYETHDVLSSSFASKLSSLDECPTGENLLNKIL</sequence>
<proteinExistence type="evidence at protein level"/>
<accession>P16300</accession>
<evidence type="ECO:0000255" key="1"/>
<evidence type="ECO:0000269" key="2">
    <source>
    </source>
</evidence>
<evidence type="ECO:0000305" key="3"/>
<protein>
    <recommendedName>
        <fullName>Lectin</fullName>
    </recommendedName>
    <alternativeName>
        <fullName>LBL</fullName>
    </alternativeName>
</protein>
<name>LEC_PHALU</name>